<organism>
    <name type="scientific">Saccharomyces cerevisiae (strain AWRI1631)</name>
    <name type="common">Baker's yeast</name>
    <dbReference type="NCBI Taxonomy" id="545124"/>
    <lineage>
        <taxon>Eukaryota</taxon>
        <taxon>Fungi</taxon>
        <taxon>Dikarya</taxon>
        <taxon>Ascomycota</taxon>
        <taxon>Saccharomycotina</taxon>
        <taxon>Saccharomycetes</taxon>
        <taxon>Saccharomycetales</taxon>
        <taxon>Saccharomycetaceae</taxon>
        <taxon>Saccharomyces</taxon>
    </lineage>
</organism>
<sequence>MSNATNNTLGSLLPQLEAAANSNSLYGGMVPNLRFNITMIVIWGILLTIHVVQLLMRQYWFSIAFICTGILEVLGFIGRTWSHSNVADMDAFLLNMICLTIAPVFTMGGIYYQLAKLIEVYGHRFSLLPSPMAYSFIFICSDIVSLVVQAVGGGLCGVAVTDGTSTTTGNHVFIAGLAIQVASMAIFLMLWFHFLFRIYISVRWEHINSRPISLSLLKISQTEVDYLYREKFHFLRLEPKRWVFHYFNLAMTVAVLTIFTRCCYRLAELVVGWDGYLITHEWYFIILDALMMAIATVTLTIFHPGFAFKGRSTSIPITPRHVDPETLPHTDDVEDILDTSDSKQFDIEKEEFQASMKYPISTFKQFMSKIANLFSSKKKAKL</sequence>
<gene>
    <name type="primary">RSB1</name>
    <name type="ORF">AWRI1631_152100</name>
</gene>
<reference key="1">
    <citation type="journal article" date="2008" name="FEMS Yeast Res.">
        <title>Comparative genome analysis of a Saccharomyces cerevisiae wine strain.</title>
        <authorList>
            <person name="Borneman A.R."/>
            <person name="Forgan A.H."/>
            <person name="Pretorius I.S."/>
            <person name="Chambers P.J."/>
        </authorList>
    </citation>
    <scope>NUCLEOTIDE SEQUENCE [LARGE SCALE GENOMIC DNA]</scope>
    <source>
        <strain>AWRI1631</strain>
    </source>
</reference>
<protein>
    <recommendedName>
        <fullName>Sphingoid long-chain base transporter RSB1</fullName>
    </recommendedName>
</protein>
<dbReference type="EMBL" id="ABSV01002137">
    <property type="protein sequence ID" value="EDZ69348.1"/>
    <property type="molecule type" value="Genomic_DNA"/>
</dbReference>
<dbReference type="GlyCosmos" id="B5VRU8">
    <property type="glycosylation" value="2 sites, No reported glycans"/>
</dbReference>
<dbReference type="OrthoDB" id="37671at4893"/>
<dbReference type="Proteomes" id="UP000008988">
    <property type="component" value="Unassembled WGS sequence"/>
</dbReference>
<dbReference type="GO" id="GO:0000324">
    <property type="term" value="C:fungal-type vacuole"/>
    <property type="evidence" value="ECO:0007669"/>
    <property type="project" value="TreeGrafter"/>
</dbReference>
<dbReference type="GO" id="GO:0005886">
    <property type="term" value="C:plasma membrane"/>
    <property type="evidence" value="ECO:0007669"/>
    <property type="project" value="UniProtKB-SubCell"/>
</dbReference>
<dbReference type="GO" id="GO:0006869">
    <property type="term" value="P:lipid transport"/>
    <property type="evidence" value="ECO:0007669"/>
    <property type="project" value="UniProtKB-KW"/>
</dbReference>
<dbReference type="InterPro" id="IPR007568">
    <property type="entry name" value="RTA1"/>
</dbReference>
<dbReference type="PANTHER" id="PTHR31465">
    <property type="entry name" value="PROTEIN RTA1-RELATED"/>
    <property type="match status" value="1"/>
</dbReference>
<dbReference type="PANTHER" id="PTHR31465:SF9">
    <property type="entry name" value="SPHINGOID LONG-CHAIN BASE TRANSPORTER RSB1"/>
    <property type="match status" value="1"/>
</dbReference>
<dbReference type="Pfam" id="PF04479">
    <property type="entry name" value="RTA1"/>
    <property type="match status" value="1"/>
</dbReference>
<accession>B5VRU8</accession>
<evidence type="ECO:0000250" key="1"/>
<evidence type="ECO:0000255" key="2"/>
<evidence type="ECO:0000305" key="3"/>
<comment type="function">
    <text evidence="1">Catalyzes the ATP-dependent translocation of sphingoid long-chain bases (LCBs) from the cytoplasmic site toward the extracytoplasmic side of the membrane (flip-flop). Involved in the establishment of the functional lipid asymmetry of the plasma membrane. Regulates intracellular levels of LCBs, sphingolipid precursors that are growth inhibitory at increased levels (By similarity).</text>
</comment>
<comment type="subcellular location">
    <subcellularLocation>
        <location evidence="1">Cell membrane</location>
        <topology>Multi-pass membrane protein</topology>
    </subcellularLocation>
</comment>
<comment type="induction">
    <text evidence="1">In response to loss of mitochondrial DNA in a transcription factor PDR3-dependent manner. Induced in response to altered glycerophospholipid asymmetry of the plasma membrane in a transcription factor PDR1-dependent manner (By similarity).</text>
</comment>
<comment type="similarity">
    <text evidence="3">Belongs to the lipid-translocating exporter (LTE) (TC 9.A.26.1) family.</text>
</comment>
<keyword id="KW-1003">Cell membrane</keyword>
<keyword id="KW-0325">Glycoprotein</keyword>
<keyword id="KW-0445">Lipid transport</keyword>
<keyword id="KW-0472">Membrane</keyword>
<keyword id="KW-0812">Transmembrane</keyword>
<keyword id="KW-1133">Transmembrane helix</keyword>
<keyword id="KW-0813">Transport</keyword>
<name>RSB1_YEAS6</name>
<proteinExistence type="inferred from homology"/>
<feature type="chain" id="PRO_0000393316" description="Sphingoid long-chain base transporter RSB1" evidence="1">
    <location>
        <begin position="1"/>
        <end position="382"/>
    </location>
</feature>
<feature type="topological domain" description="Extracellular" evidence="1">
    <location>
        <begin position="1"/>
        <end position="34"/>
    </location>
</feature>
<feature type="transmembrane region" description="Helical" evidence="2">
    <location>
        <begin position="35"/>
        <end position="55"/>
    </location>
</feature>
<feature type="topological domain" description="Cytoplasmic" evidence="1">
    <location>
        <begin position="56"/>
        <end position="57"/>
    </location>
</feature>
<feature type="transmembrane region" description="Helical" evidence="2">
    <location>
        <begin position="58"/>
        <end position="78"/>
    </location>
</feature>
<feature type="topological domain" description="Extracellular" evidence="1">
    <location>
        <begin position="79"/>
        <end position="90"/>
    </location>
</feature>
<feature type="transmembrane region" description="Helical" evidence="2">
    <location>
        <begin position="91"/>
        <end position="111"/>
    </location>
</feature>
<feature type="topological domain" description="Cytoplasmic" evidence="1">
    <location>
        <begin position="112"/>
        <end position="135"/>
    </location>
</feature>
<feature type="transmembrane region" description="Helical" evidence="2">
    <location>
        <begin position="136"/>
        <end position="156"/>
    </location>
</feature>
<feature type="topological domain" description="Extracellular" evidence="1">
    <location>
        <begin position="157"/>
        <end position="171"/>
    </location>
</feature>
<feature type="transmembrane region" description="Helical" evidence="2">
    <location>
        <begin position="172"/>
        <end position="192"/>
    </location>
</feature>
<feature type="topological domain" description="Cytoplasmic" evidence="1">
    <location>
        <begin position="193"/>
        <end position="241"/>
    </location>
</feature>
<feature type="transmembrane region" description="Helical" evidence="2">
    <location>
        <begin position="242"/>
        <end position="262"/>
    </location>
</feature>
<feature type="topological domain" description="Extracellular" evidence="1">
    <location>
        <begin position="263"/>
        <end position="281"/>
    </location>
</feature>
<feature type="transmembrane region" description="Helical" evidence="2">
    <location>
        <begin position="282"/>
        <end position="302"/>
    </location>
</feature>
<feature type="topological domain" description="Cytoplasmic" evidence="1">
    <location>
        <begin position="303"/>
        <end position="382"/>
    </location>
</feature>
<feature type="glycosylation site" description="N-linked (GlcNAc...) asparagine" evidence="2">
    <location>
        <position position="3"/>
    </location>
</feature>
<feature type="glycosylation site" description="N-linked (GlcNAc...) asparagine" evidence="2">
    <location>
        <position position="6"/>
    </location>
</feature>